<sequence>MKAGIHPEFKKATVKCACGNEFETGSVKEEVRVEICSECHPFYTGRQKFASADGRVDRFNKKYGLK</sequence>
<name>RL31_BACLD</name>
<comment type="function">
    <text evidence="1">Binds the 23S rRNA.</text>
</comment>
<comment type="cofactor">
    <cofactor evidence="1">
        <name>Zn(2+)</name>
        <dbReference type="ChEBI" id="CHEBI:29105"/>
    </cofactor>
    <text evidence="1">Binds 1 zinc ion per subunit.</text>
</comment>
<comment type="subunit">
    <text evidence="1">Part of the 50S ribosomal subunit.</text>
</comment>
<comment type="similarity">
    <text evidence="1">Belongs to the bacterial ribosomal protein bL31 family. Type A subfamily.</text>
</comment>
<accession>Q65DU5</accession>
<accession>Q62PB7</accession>
<protein>
    <recommendedName>
        <fullName evidence="1">Large ribosomal subunit protein bL31</fullName>
    </recommendedName>
    <alternativeName>
        <fullName evidence="2">50S ribosomal protein L31</fullName>
    </alternativeName>
</protein>
<organism>
    <name type="scientific">Bacillus licheniformis (strain ATCC 14580 / DSM 13 / JCM 2505 / CCUG 7422 / NBRC 12200 / NCIMB 9375 / NCTC 10341 / NRRL NRS-1264 / Gibson 46)</name>
    <dbReference type="NCBI Taxonomy" id="279010"/>
    <lineage>
        <taxon>Bacteria</taxon>
        <taxon>Bacillati</taxon>
        <taxon>Bacillota</taxon>
        <taxon>Bacilli</taxon>
        <taxon>Bacillales</taxon>
        <taxon>Bacillaceae</taxon>
        <taxon>Bacillus</taxon>
    </lineage>
</organism>
<proteinExistence type="inferred from homology"/>
<keyword id="KW-0479">Metal-binding</keyword>
<keyword id="KW-1185">Reference proteome</keyword>
<keyword id="KW-0687">Ribonucleoprotein</keyword>
<keyword id="KW-0689">Ribosomal protein</keyword>
<keyword id="KW-0694">RNA-binding</keyword>
<keyword id="KW-0699">rRNA-binding</keyword>
<keyword id="KW-0862">Zinc</keyword>
<evidence type="ECO:0000255" key="1">
    <source>
        <dbReference type="HAMAP-Rule" id="MF_00501"/>
    </source>
</evidence>
<evidence type="ECO:0000305" key="2"/>
<dbReference type="EMBL" id="AE017333">
    <property type="protein sequence ID" value="AAU42769.1"/>
    <property type="molecule type" value="Genomic_DNA"/>
</dbReference>
<dbReference type="EMBL" id="CP000002">
    <property type="protein sequence ID" value="AAU25394.1"/>
    <property type="molecule type" value="Genomic_DNA"/>
</dbReference>
<dbReference type="RefSeq" id="WP_003186051.1">
    <property type="nucleotide sequence ID" value="NC_006322.1"/>
</dbReference>
<dbReference type="SMR" id="Q65DU5"/>
<dbReference type="STRING" id="279010.BL03974"/>
<dbReference type="GeneID" id="92859472"/>
<dbReference type="KEGG" id="bld:BLi03955"/>
<dbReference type="KEGG" id="bli:BL03974"/>
<dbReference type="eggNOG" id="COG0254">
    <property type="taxonomic scope" value="Bacteria"/>
</dbReference>
<dbReference type="HOGENOM" id="CLU_114306_4_3_9"/>
<dbReference type="Proteomes" id="UP000000606">
    <property type="component" value="Chromosome"/>
</dbReference>
<dbReference type="GO" id="GO:1990904">
    <property type="term" value="C:ribonucleoprotein complex"/>
    <property type="evidence" value="ECO:0007669"/>
    <property type="project" value="UniProtKB-KW"/>
</dbReference>
<dbReference type="GO" id="GO:0005840">
    <property type="term" value="C:ribosome"/>
    <property type="evidence" value="ECO:0007669"/>
    <property type="project" value="UniProtKB-KW"/>
</dbReference>
<dbReference type="GO" id="GO:0046872">
    <property type="term" value="F:metal ion binding"/>
    <property type="evidence" value="ECO:0007669"/>
    <property type="project" value="UniProtKB-KW"/>
</dbReference>
<dbReference type="GO" id="GO:0019843">
    <property type="term" value="F:rRNA binding"/>
    <property type="evidence" value="ECO:0007669"/>
    <property type="project" value="UniProtKB-KW"/>
</dbReference>
<dbReference type="GO" id="GO:0003735">
    <property type="term" value="F:structural constituent of ribosome"/>
    <property type="evidence" value="ECO:0007669"/>
    <property type="project" value="InterPro"/>
</dbReference>
<dbReference type="GO" id="GO:0006412">
    <property type="term" value="P:translation"/>
    <property type="evidence" value="ECO:0007669"/>
    <property type="project" value="UniProtKB-UniRule"/>
</dbReference>
<dbReference type="Gene3D" id="4.10.830.30">
    <property type="entry name" value="Ribosomal protein L31"/>
    <property type="match status" value="1"/>
</dbReference>
<dbReference type="HAMAP" id="MF_00501">
    <property type="entry name" value="Ribosomal_bL31_1"/>
    <property type="match status" value="1"/>
</dbReference>
<dbReference type="InterPro" id="IPR034704">
    <property type="entry name" value="Ribosomal_bL28/bL31-like_sf"/>
</dbReference>
<dbReference type="InterPro" id="IPR002150">
    <property type="entry name" value="Ribosomal_bL31"/>
</dbReference>
<dbReference type="InterPro" id="IPR027491">
    <property type="entry name" value="Ribosomal_bL31_A"/>
</dbReference>
<dbReference type="InterPro" id="IPR042105">
    <property type="entry name" value="Ribosomal_bL31_sf"/>
</dbReference>
<dbReference type="NCBIfam" id="TIGR00105">
    <property type="entry name" value="L31"/>
    <property type="match status" value="1"/>
</dbReference>
<dbReference type="NCBIfam" id="NF000612">
    <property type="entry name" value="PRK00019.1"/>
    <property type="match status" value="1"/>
</dbReference>
<dbReference type="NCBIfam" id="NF001809">
    <property type="entry name" value="PRK00528.1"/>
    <property type="match status" value="1"/>
</dbReference>
<dbReference type="PANTHER" id="PTHR33280">
    <property type="entry name" value="50S RIBOSOMAL PROTEIN L31, CHLOROPLASTIC"/>
    <property type="match status" value="1"/>
</dbReference>
<dbReference type="PANTHER" id="PTHR33280:SF1">
    <property type="entry name" value="LARGE RIBOSOMAL SUBUNIT PROTEIN BL31C"/>
    <property type="match status" value="1"/>
</dbReference>
<dbReference type="Pfam" id="PF01197">
    <property type="entry name" value="Ribosomal_L31"/>
    <property type="match status" value="1"/>
</dbReference>
<dbReference type="PRINTS" id="PR01249">
    <property type="entry name" value="RIBOSOMALL31"/>
</dbReference>
<dbReference type="SUPFAM" id="SSF143800">
    <property type="entry name" value="L28p-like"/>
    <property type="match status" value="1"/>
</dbReference>
<dbReference type="PROSITE" id="PS01143">
    <property type="entry name" value="RIBOSOMAL_L31"/>
    <property type="match status" value="1"/>
</dbReference>
<feature type="chain" id="PRO_0000173077" description="Large ribosomal subunit protein bL31">
    <location>
        <begin position="1"/>
        <end position="66"/>
    </location>
</feature>
<feature type="binding site" evidence="1">
    <location>
        <position position="16"/>
    </location>
    <ligand>
        <name>Zn(2+)</name>
        <dbReference type="ChEBI" id="CHEBI:29105"/>
    </ligand>
</feature>
<feature type="binding site" evidence="1">
    <location>
        <position position="18"/>
    </location>
    <ligand>
        <name>Zn(2+)</name>
        <dbReference type="ChEBI" id="CHEBI:29105"/>
    </ligand>
</feature>
<feature type="binding site" evidence="1">
    <location>
        <position position="36"/>
    </location>
    <ligand>
        <name>Zn(2+)</name>
        <dbReference type="ChEBI" id="CHEBI:29105"/>
    </ligand>
</feature>
<feature type="binding site" evidence="1">
    <location>
        <position position="39"/>
    </location>
    <ligand>
        <name>Zn(2+)</name>
        <dbReference type="ChEBI" id="CHEBI:29105"/>
    </ligand>
</feature>
<reference key="1">
    <citation type="journal article" date="2004" name="J. Mol. Microbiol. Biotechnol.">
        <title>The complete genome sequence of Bacillus licheniformis DSM13, an organism with great industrial potential.</title>
        <authorList>
            <person name="Veith B."/>
            <person name="Herzberg C."/>
            <person name="Steckel S."/>
            <person name="Feesche J."/>
            <person name="Maurer K.H."/>
            <person name="Ehrenreich P."/>
            <person name="Baeumer S."/>
            <person name="Henne A."/>
            <person name="Liesegang H."/>
            <person name="Merkl R."/>
            <person name="Ehrenreich A."/>
            <person name="Gottschalk G."/>
        </authorList>
    </citation>
    <scope>NUCLEOTIDE SEQUENCE [LARGE SCALE GENOMIC DNA]</scope>
    <source>
        <strain>ATCC 14580 / DSM 13 / JCM 2505 / CCUG 7422 / NBRC 12200 / NCIMB 9375 / NCTC 10341 / NRRL NRS-1264 / Gibson 46</strain>
    </source>
</reference>
<reference key="2">
    <citation type="journal article" date="2004" name="Genome Biol.">
        <title>Complete genome sequence of the industrial bacterium Bacillus licheniformis and comparisons with closely related Bacillus species.</title>
        <authorList>
            <person name="Rey M.W."/>
            <person name="Ramaiya P."/>
            <person name="Nelson B.A."/>
            <person name="Brody-Karpin S.D."/>
            <person name="Zaretsky E.J."/>
            <person name="Tang M."/>
            <person name="Lopez de Leon A."/>
            <person name="Xiang H."/>
            <person name="Gusti V."/>
            <person name="Clausen I.G."/>
            <person name="Olsen P.B."/>
            <person name="Rasmussen M.D."/>
            <person name="Andersen J.T."/>
            <person name="Joergensen P.L."/>
            <person name="Larsen T.S."/>
            <person name="Sorokin A."/>
            <person name="Bolotin A."/>
            <person name="Lapidus A."/>
            <person name="Galleron N."/>
            <person name="Ehrlich S.D."/>
            <person name="Berka R.M."/>
        </authorList>
    </citation>
    <scope>NUCLEOTIDE SEQUENCE [LARGE SCALE GENOMIC DNA]</scope>
    <source>
        <strain>ATCC 14580 / DSM 13 / JCM 2505 / CCUG 7422 / NBRC 12200 / NCIMB 9375 / NCTC 10341 / NRRL NRS-1264 / Gibson 46</strain>
    </source>
</reference>
<gene>
    <name evidence="1" type="primary">rpmE</name>
    <name type="ordered locus">BLi03955</name>
    <name type="ordered locus">BL03974</name>
</gene>